<organism>
    <name type="scientific">Salmonella heidelberg (strain SL476)</name>
    <dbReference type="NCBI Taxonomy" id="454169"/>
    <lineage>
        <taxon>Bacteria</taxon>
        <taxon>Pseudomonadati</taxon>
        <taxon>Pseudomonadota</taxon>
        <taxon>Gammaproteobacteria</taxon>
        <taxon>Enterobacterales</taxon>
        <taxon>Enterobacteriaceae</taxon>
        <taxon>Salmonella</taxon>
    </lineage>
</organism>
<sequence length="482" mass="54803">MKFIIKLFPEITIKSQSVRLRFIKILTGNIRNVLKHYDETLAVVRHWDNIEVRAKDENQRLAIRDALTRIPGIHHILEVEDVPFTDMHDIFEKALAQYREQLEGKTFCVRVKRRGKHEFSSIEVERYVGGGLNQHIESARVKLTNPDVTVHLEVEDDRLLLIKGRYEGIGGFPIGTQEDVLSLISGGFDSGVSSYMLMRRGCRVHYCFFNLGGAAHEIGVRQVAHYLWNRFGSSHRVRFVAINFEPVVGEILEKVDDGQMGVVLKRMMVRAASKVAERYGVQALVTGEALGQVSSQTLTNLRLIDNVSDTLILRPLISYDKEHIINLARQIGTEDFARTMPEYCGVISKSPTVKAIKAKIEAEEENFDFSILDKVVEEANNVDIREIAQQTQQEVVEVETVSGFGPNDVILDIRSVDEQDDKPLKVEGVDVVSLPFYKLSTKFGDLDQSKTWLLWCERGVMSRLQALYLREQGFANVKVYRP</sequence>
<feature type="chain" id="PRO_1000090031" description="tRNA sulfurtransferase">
    <location>
        <begin position="1"/>
        <end position="482"/>
    </location>
</feature>
<feature type="domain" description="THUMP" evidence="1">
    <location>
        <begin position="61"/>
        <end position="165"/>
    </location>
</feature>
<feature type="domain" description="Rhodanese" evidence="1">
    <location>
        <begin position="404"/>
        <end position="482"/>
    </location>
</feature>
<feature type="active site" description="Cysteine persulfide intermediate" evidence="1">
    <location>
        <position position="456"/>
    </location>
</feature>
<feature type="binding site" evidence="1">
    <location>
        <begin position="183"/>
        <end position="184"/>
    </location>
    <ligand>
        <name>ATP</name>
        <dbReference type="ChEBI" id="CHEBI:30616"/>
    </ligand>
</feature>
<feature type="binding site" evidence="1">
    <location>
        <position position="265"/>
    </location>
    <ligand>
        <name>ATP</name>
        <dbReference type="ChEBI" id="CHEBI:30616"/>
    </ligand>
</feature>
<feature type="binding site" evidence="1">
    <location>
        <position position="287"/>
    </location>
    <ligand>
        <name>ATP</name>
        <dbReference type="ChEBI" id="CHEBI:30616"/>
    </ligand>
</feature>
<feature type="binding site" evidence="1">
    <location>
        <position position="296"/>
    </location>
    <ligand>
        <name>ATP</name>
        <dbReference type="ChEBI" id="CHEBI:30616"/>
    </ligand>
</feature>
<feature type="disulfide bond" description="Redox-active" evidence="1">
    <location>
        <begin position="344"/>
        <end position="456"/>
    </location>
</feature>
<gene>
    <name evidence="1" type="primary">thiI</name>
    <name type="ordered locus">SeHA_C0527</name>
</gene>
<keyword id="KW-0067">ATP-binding</keyword>
<keyword id="KW-0963">Cytoplasm</keyword>
<keyword id="KW-1015">Disulfide bond</keyword>
<keyword id="KW-0547">Nucleotide-binding</keyword>
<keyword id="KW-0676">Redox-active center</keyword>
<keyword id="KW-0694">RNA-binding</keyword>
<keyword id="KW-0784">Thiamine biosynthesis</keyword>
<keyword id="KW-0808">Transferase</keyword>
<keyword id="KW-0820">tRNA-binding</keyword>
<protein>
    <recommendedName>
        <fullName evidence="1">tRNA sulfurtransferase</fullName>
        <ecNumber evidence="1">2.8.1.4</ecNumber>
    </recommendedName>
    <alternativeName>
        <fullName evidence="1">Sulfur carrier protein ThiS sulfurtransferase</fullName>
    </alternativeName>
    <alternativeName>
        <fullName evidence="1">Thiamine biosynthesis protein ThiI</fullName>
    </alternativeName>
    <alternativeName>
        <fullName evidence="1">tRNA 4-thiouridine synthase</fullName>
    </alternativeName>
</protein>
<name>THII_SALHS</name>
<reference key="1">
    <citation type="journal article" date="2011" name="J. Bacteriol.">
        <title>Comparative genomics of 28 Salmonella enterica isolates: evidence for CRISPR-mediated adaptive sublineage evolution.</title>
        <authorList>
            <person name="Fricke W.F."/>
            <person name="Mammel M.K."/>
            <person name="McDermott P.F."/>
            <person name="Tartera C."/>
            <person name="White D.G."/>
            <person name="Leclerc J.E."/>
            <person name="Ravel J."/>
            <person name="Cebula T.A."/>
        </authorList>
    </citation>
    <scope>NUCLEOTIDE SEQUENCE [LARGE SCALE GENOMIC DNA]</scope>
    <source>
        <strain>SL476</strain>
    </source>
</reference>
<proteinExistence type="inferred from homology"/>
<accession>B4T8R6</accession>
<comment type="function">
    <text evidence="1">Catalyzes the ATP-dependent transfer of a sulfur to tRNA to produce 4-thiouridine in position 8 of tRNAs, which functions as a near-UV photosensor. Also catalyzes the transfer of sulfur to the sulfur carrier protein ThiS, forming ThiS-thiocarboxylate. This is a step in the synthesis of thiazole, in the thiamine biosynthesis pathway. The sulfur is donated as persulfide by IscS.</text>
</comment>
<comment type="catalytic activity">
    <reaction evidence="1">
        <text>[ThiI sulfur-carrier protein]-S-sulfanyl-L-cysteine + a uridine in tRNA + 2 reduced [2Fe-2S]-[ferredoxin] + ATP + H(+) = [ThiI sulfur-carrier protein]-L-cysteine + a 4-thiouridine in tRNA + 2 oxidized [2Fe-2S]-[ferredoxin] + AMP + diphosphate</text>
        <dbReference type="Rhea" id="RHEA:24176"/>
        <dbReference type="Rhea" id="RHEA-COMP:10000"/>
        <dbReference type="Rhea" id="RHEA-COMP:10001"/>
        <dbReference type="Rhea" id="RHEA-COMP:13337"/>
        <dbReference type="Rhea" id="RHEA-COMP:13338"/>
        <dbReference type="Rhea" id="RHEA-COMP:13339"/>
        <dbReference type="Rhea" id="RHEA-COMP:13340"/>
        <dbReference type="ChEBI" id="CHEBI:15378"/>
        <dbReference type="ChEBI" id="CHEBI:29950"/>
        <dbReference type="ChEBI" id="CHEBI:30616"/>
        <dbReference type="ChEBI" id="CHEBI:33019"/>
        <dbReference type="ChEBI" id="CHEBI:33737"/>
        <dbReference type="ChEBI" id="CHEBI:33738"/>
        <dbReference type="ChEBI" id="CHEBI:61963"/>
        <dbReference type="ChEBI" id="CHEBI:65315"/>
        <dbReference type="ChEBI" id="CHEBI:136798"/>
        <dbReference type="ChEBI" id="CHEBI:456215"/>
        <dbReference type="EC" id="2.8.1.4"/>
    </reaction>
</comment>
<comment type="catalytic activity">
    <reaction evidence="1">
        <text>[ThiS sulfur-carrier protein]-C-terminal Gly-Gly-AMP + S-sulfanyl-L-cysteinyl-[cysteine desulfurase] + AH2 = [ThiS sulfur-carrier protein]-C-terminal-Gly-aminoethanethioate + L-cysteinyl-[cysteine desulfurase] + A + AMP + 2 H(+)</text>
        <dbReference type="Rhea" id="RHEA:43340"/>
        <dbReference type="Rhea" id="RHEA-COMP:12157"/>
        <dbReference type="Rhea" id="RHEA-COMP:12158"/>
        <dbReference type="Rhea" id="RHEA-COMP:12910"/>
        <dbReference type="Rhea" id="RHEA-COMP:19908"/>
        <dbReference type="ChEBI" id="CHEBI:13193"/>
        <dbReference type="ChEBI" id="CHEBI:15378"/>
        <dbReference type="ChEBI" id="CHEBI:17499"/>
        <dbReference type="ChEBI" id="CHEBI:29950"/>
        <dbReference type="ChEBI" id="CHEBI:61963"/>
        <dbReference type="ChEBI" id="CHEBI:90618"/>
        <dbReference type="ChEBI" id="CHEBI:232372"/>
        <dbReference type="ChEBI" id="CHEBI:456215"/>
    </reaction>
</comment>
<comment type="pathway">
    <text evidence="1">Cofactor biosynthesis; thiamine diphosphate biosynthesis.</text>
</comment>
<comment type="subcellular location">
    <subcellularLocation>
        <location evidence="1">Cytoplasm</location>
    </subcellularLocation>
</comment>
<comment type="similarity">
    <text evidence="1">Belongs to the ThiI family.</text>
</comment>
<dbReference type="EC" id="2.8.1.4" evidence="1"/>
<dbReference type="EMBL" id="CP001120">
    <property type="protein sequence ID" value="ACF67201.1"/>
    <property type="molecule type" value="Genomic_DNA"/>
</dbReference>
<dbReference type="RefSeq" id="WP_000668650.1">
    <property type="nucleotide sequence ID" value="NC_011083.1"/>
</dbReference>
<dbReference type="SMR" id="B4T8R6"/>
<dbReference type="KEGG" id="seh:SeHA_C0527"/>
<dbReference type="HOGENOM" id="CLU_037952_4_1_6"/>
<dbReference type="UniPathway" id="UPA00060"/>
<dbReference type="Proteomes" id="UP000001866">
    <property type="component" value="Chromosome"/>
</dbReference>
<dbReference type="GO" id="GO:0005829">
    <property type="term" value="C:cytosol"/>
    <property type="evidence" value="ECO:0007669"/>
    <property type="project" value="TreeGrafter"/>
</dbReference>
<dbReference type="GO" id="GO:0005524">
    <property type="term" value="F:ATP binding"/>
    <property type="evidence" value="ECO:0007669"/>
    <property type="project" value="UniProtKB-UniRule"/>
</dbReference>
<dbReference type="GO" id="GO:0004810">
    <property type="term" value="F:CCA tRNA nucleotidyltransferase activity"/>
    <property type="evidence" value="ECO:0007669"/>
    <property type="project" value="InterPro"/>
</dbReference>
<dbReference type="GO" id="GO:0000049">
    <property type="term" value="F:tRNA binding"/>
    <property type="evidence" value="ECO:0007669"/>
    <property type="project" value="UniProtKB-UniRule"/>
</dbReference>
<dbReference type="GO" id="GO:0140741">
    <property type="term" value="F:tRNA-uracil-4 sulfurtransferase activity"/>
    <property type="evidence" value="ECO:0007669"/>
    <property type="project" value="UniProtKB-EC"/>
</dbReference>
<dbReference type="GO" id="GO:0009228">
    <property type="term" value="P:thiamine biosynthetic process"/>
    <property type="evidence" value="ECO:0007669"/>
    <property type="project" value="UniProtKB-KW"/>
</dbReference>
<dbReference type="GO" id="GO:0009229">
    <property type="term" value="P:thiamine diphosphate biosynthetic process"/>
    <property type="evidence" value="ECO:0007669"/>
    <property type="project" value="UniProtKB-UniRule"/>
</dbReference>
<dbReference type="GO" id="GO:0052837">
    <property type="term" value="P:thiazole biosynthetic process"/>
    <property type="evidence" value="ECO:0007669"/>
    <property type="project" value="InterPro"/>
</dbReference>
<dbReference type="GO" id="GO:0002937">
    <property type="term" value="P:tRNA 4-thiouridine biosynthesis"/>
    <property type="evidence" value="ECO:0007669"/>
    <property type="project" value="TreeGrafter"/>
</dbReference>
<dbReference type="CDD" id="cd01712">
    <property type="entry name" value="PPase_ThiI"/>
    <property type="match status" value="1"/>
</dbReference>
<dbReference type="CDD" id="cd00158">
    <property type="entry name" value="RHOD"/>
    <property type="match status" value="1"/>
</dbReference>
<dbReference type="CDD" id="cd11716">
    <property type="entry name" value="THUMP_ThiI"/>
    <property type="match status" value="1"/>
</dbReference>
<dbReference type="FunFam" id="3.30.2130.30:FF:000002">
    <property type="entry name" value="tRNA sulfurtransferase"/>
    <property type="match status" value="1"/>
</dbReference>
<dbReference type="FunFam" id="3.40.250.10:FF:000003">
    <property type="entry name" value="tRNA sulfurtransferase"/>
    <property type="match status" value="1"/>
</dbReference>
<dbReference type="FunFam" id="3.40.50.620:FF:000029">
    <property type="entry name" value="tRNA sulfurtransferase"/>
    <property type="match status" value="1"/>
</dbReference>
<dbReference type="Gene3D" id="3.30.2130.30">
    <property type="match status" value="1"/>
</dbReference>
<dbReference type="Gene3D" id="3.40.50.620">
    <property type="entry name" value="HUPs"/>
    <property type="match status" value="1"/>
</dbReference>
<dbReference type="Gene3D" id="3.40.250.10">
    <property type="entry name" value="Rhodanese-like domain"/>
    <property type="match status" value="1"/>
</dbReference>
<dbReference type="HAMAP" id="MF_00021">
    <property type="entry name" value="ThiI"/>
    <property type="match status" value="1"/>
</dbReference>
<dbReference type="InterPro" id="IPR001763">
    <property type="entry name" value="Rhodanese-like_dom"/>
</dbReference>
<dbReference type="InterPro" id="IPR036873">
    <property type="entry name" value="Rhodanese-like_dom_sf"/>
</dbReference>
<dbReference type="InterPro" id="IPR014729">
    <property type="entry name" value="Rossmann-like_a/b/a_fold"/>
</dbReference>
<dbReference type="InterPro" id="IPR020536">
    <property type="entry name" value="ThiI_AANH"/>
</dbReference>
<dbReference type="InterPro" id="IPR054173">
    <property type="entry name" value="ThiI_fer"/>
</dbReference>
<dbReference type="InterPro" id="IPR049961">
    <property type="entry name" value="ThiI_N"/>
</dbReference>
<dbReference type="InterPro" id="IPR026340">
    <property type="entry name" value="THII_Thiazole_biosynth_dom"/>
</dbReference>
<dbReference type="InterPro" id="IPR004114">
    <property type="entry name" value="THUMP_dom"/>
</dbReference>
<dbReference type="InterPro" id="IPR049962">
    <property type="entry name" value="THUMP_ThiI"/>
</dbReference>
<dbReference type="InterPro" id="IPR003720">
    <property type="entry name" value="tRNA_STrfase"/>
</dbReference>
<dbReference type="InterPro" id="IPR050102">
    <property type="entry name" value="tRNA_sulfurtransferase_ThiI"/>
</dbReference>
<dbReference type="NCBIfam" id="TIGR04271">
    <property type="entry name" value="ThiI_C_thiazole"/>
    <property type="match status" value="1"/>
</dbReference>
<dbReference type="NCBIfam" id="TIGR00342">
    <property type="entry name" value="tRNA uracil 4-sulfurtransferase ThiI"/>
    <property type="match status" value="1"/>
</dbReference>
<dbReference type="PANTHER" id="PTHR43209">
    <property type="entry name" value="TRNA SULFURTRANSFERASE"/>
    <property type="match status" value="1"/>
</dbReference>
<dbReference type="PANTHER" id="PTHR43209:SF1">
    <property type="entry name" value="TRNA SULFURTRANSFERASE"/>
    <property type="match status" value="1"/>
</dbReference>
<dbReference type="Pfam" id="PF02568">
    <property type="entry name" value="ThiI"/>
    <property type="match status" value="1"/>
</dbReference>
<dbReference type="Pfam" id="PF22025">
    <property type="entry name" value="ThiI_fer"/>
    <property type="match status" value="1"/>
</dbReference>
<dbReference type="Pfam" id="PF02926">
    <property type="entry name" value="THUMP"/>
    <property type="match status" value="1"/>
</dbReference>
<dbReference type="SMART" id="SM00981">
    <property type="entry name" value="THUMP"/>
    <property type="match status" value="1"/>
</dbReference>
<dbReference type="SUPFAM" id="SSF52402">
    <property type="entry name" value="Adenine nucleotide alpha hydrolases-like"/>
    <property type="match status" value="1"/>
</dbReference>
<dbReference type="SUPFAM" id="SSF52821">
    <property type="entry name" value="Rhodanese/Cell cycle control phosphatase"/>
    <property type="match status" value="1"/>
</dbReference>
<dbReference type="SUPFAM" id="SSF143437">
    <property type="entry name" value="THUMP domain-like"/>
    <property type="match status" value="1"/>
</dbReference>
<dbReference type="PROSITE" id="PS50206">
    <property type="entry name" value="RHODANESE_3"/>
    <property type="match status" value="1"/>
</dbReference>
<dbReference type="PROSITE" id="PS51165">
    <property type="entry name" value="THUMP"/>
    <property type="match status" value="1"/>
</dbReference>
<evidence type="ECO:0000255" key="1">
    <source>
        <dbReference type="HAMAP-Rule" id="MF_00021"/>
    </source>
</evidence>